<gene>
    <name evidence="1" type="primary">lpxD</name>
    <name type="ordered locus">BF0829</name>
</gene>
<organism>
    <name type="scientific">Bacteroides fragilis (strain ATCC 25285 / DSM 2151 / CCUG 4856 / JCM 11019 / LMG 10263 / NCTC 9343 / Onslow / VPI 2553 / EN-2)</name>
    <dbReference type="NCBI Taxonomy" id="272559"/>
    <lineage>
        <taxon>Bacteria</taxon>
        <taxon>Pseudomonadati</taxon>
        <taxon>Bacteroidota</taxon>
        <taxon>Bacteroidia</taxon>
        <taxon>Bacteroidales</taxon>
        <taxon>Bacteroidaceae</taxon>
        <taxon>Bacteroides</taxon>
    </lineage>
</organism>
<accession>Q5LH14</accession>
<comment type="function">
    <text evidence="1">Catalyzes the N-acylation of UDP-3-O-acylglucosamine using 3-hydroxyacyl-ACP as the acyl donor. Is involved in the biosynthesis of lipid A, a phosphorylated glycolipid that anchors the lipopolysaccharide to the outer membrane of the cell.</text>
</comment>
<comment type="catalytic activity">
    <reaction evidence="1">
        <text>a UDP-3-O-[(3R)-3-hydroxyacyl]-alpha-D-glucosamine + a (3R)-hydroxyacyl-[ACP] = a UDP-2-N,3-O-bis[(3R)-3-hydroxyacyl]-alpha-D-glucosamine + holo-[ACP] + H(+)</text>
        <dbReference type="Rhea" id="RHEA:53836"/>
        <dbReference type="Rhea" id="RHEA-COMP:9685"/>
        <dbReference type="Rhea" id="RHEA-COMP:9945"/>
        <dbReference type="ChEBI" id="CHEBI:15378"/>
        <dbReference type="ChEBI" id="CHEBI:64479"/>
        <dbReference type="ChEBI" id="CHEBI:78827"/>
        <dbReference type="ChEBI" id="CHEBI:137740"/>
        <dbReference type="ChEBI" id="CHEBI:137748"/>
        <dbReference type="EC" id="2.3.1.191"/>
    </reaction>
</comment>
<comment type="pathway">
    <text evidence="1">Bacterial outer membrane biogenesis; LPS lipid A biosynthesis.</text>
</comment>
<comment type="subunit">
    <text evidence="1">Homotrimer.</text>
</comment>
<comment type="similarity">
    <text evidence="1">Belongs to the transferase hexapeptide repeat family. LpxD subfamily.</text>
</comment>
<sequence>MEFSAKQIAAFIQGEIIGDENATVHTFAKIEEGIPGAISFLSNPKYTPYIYETKASIVLVNKDFTPEQEVKATLIKVDNAYESLAKLLNLYEMSKPKRTGIDERAYVAETAKIGKDVYIAPFACIGDHAEVGDNTVIHPHATVGGGAKIGSNCILYANSTVYHDCRVGNNCILHAGCVIGADGFGFAPTPQGYEKIPQIGIVILEDNVEVGANTCIDRATMGATVIHSGVKLDNLVQIAHNDEIGSHTVMAAQVGIAGSTKVGEWCMFGGQVGIAGHLKIGNQVNLGAQSGVPGNIKSGSQLIGTPPMELKQFFKASIVQKSLPEMQIELRNLRKEIEELKQQLNK</sequence>
<keyword id="KW-0012">Acyltransferase</keyword>
<keyword id="KW-0441">Lipid A biosynthesis</keyword>
<keyword id="KW-0444">Lipid biosynthesis</keyword>
<keyword id="KW-0443">Lipid metabolism</keyword>
<keyword id="KW-0677">Repeat</keyword>
<keyword id="KW-0808">Transferase</keyword>
<dbReference type="EC" id="2.3.1.191" evidence="1"/>
<dbReference type="EMBL" id="CR626927">
    <property type="protein sequence ID" value="CAH06572.1"/>
    <property type="molecule type" value="Genomic_DNA"/>
</dbReference>
<dbReference type="RefSeq" id="WP_005785122.1">
    <property type="nucleotide sequence ID" value="NZ_UFTH01000001.1"/>
</dbReference>
<dbReference type="SMR" id="Q5LH14"/>
<dbReference type="PaxDb" id="272559-BF9343_0791"/>
<dbReference type="GeneID" id="60367546"/>
<dbReference type="KEGG" id="bfs:BF9343_0791"/>
<dbReference type="eggNOG" id="COG1044">
    <property type="taxonomic scope" value="Bacteria"/>
</dbReference>
<dbReference type="HOGENOM" id="CLU_049865_0_0_10"/>
<dbReference type="UniPathway" id="UPA00973"/>
<dbReference type="Proteomes" id="UP000006731">
    <property type="component" value="Chromosome"/>
</dbReference>
<dbReference type="GO" id="GO:0016020">
    <property type="term" value="C:membrane"/>
    <property type="evidence" value="ECO:0007669"/>
    <property type="project" value="GOC"/>
</dbReference>
<dbReference type="GO" id="GO:0016410">
    <property type="term" value="F:N-acyltransferase activity"/>
    <property type="evidence" value="ECO:0007669"/>
    <property type="project" value="InterPro"/>
</dbReference>
<dbReference type="GO" id="GO:0009245">
    <property type="term" value="P:lipid A biosynthetic process"/>
    <property type="evidence" value="ECO:0007669"/>
    <property type="project" value="UniProtKB-UniRule"/>
</dbReference>
<dbReference type="CDD" id="cd03352">
    <property type="entry name" value="LbH_LpxD"/>
    <property type="match status" value="1"/>
</dbReference>
<dbReference type="Gene3D" id="2.160.10.10">
    <property type="entry name" value="Hexapeptide repeat proteins"/>
    <property type="match status" value="1"/>
</dbReference>
<dbReference type="Gene3D" id="3.40.1390.10">
    <property type="entry name" value="MurE/MurF, N-terminal domain"/>
    <property type="match status" value="1"/>
</dbReference>
<dbReference type="HAMAP" id="MF_00523">
    <property type="entry name" value="LpxD"/>
    <property type="match status" value="1"/>
</dbReference>
<dbReference type="InterPro" id="IPR001451">
    <property type="entry name" value="Hexapep"/>
</dbReference>
<dbReference type="InterPro" id="IPR007691">
    <property type="entry name" value="LpxD"/>
</dbReference>
<dbReference type="InterPro" id="IPR011004">
    <property type="entry name" value="Trimer_LpxA-like_sf"/>
</dbReference>
<dbReference type="InterPro" id="IPR020573">
    <property type="entry name" value="UDP_GlcNAc_AcTrfase_non-rep"/>
</dbReference>
<dbReference type="NCBIfam" id="TIGR01853">
    <property type="entry name" value="lipid_A_lpxD"/>
    <property type="match status" value="1"/>
</dbReference>
<dbReference type="NCBIfam" id="NF002060">
    <property type="entry name" value="PRK00892.1"/>
    <property type="match status" value="1"/>
</dbReference>
<dbReference type="PANTHER" id="PTHR43378">
    <property type="entry name" value="UDP-3-O-ACYLGLUCOSAMINE N-ACYLTRANSFERASE"/>
    <property type="match status" value="1"/>
</dbReference>
<dbReference type="PANTHER" id="PTHR43378:SF2">
    <property type="entry name" value="UDP-3-O-ACYLGLUCOSAMINE N-ACYLTRANSFERASE 1, MITOCHONDRIAL-RELATED"/>
    <property type="match status" value="1"/>
</dbReference>
<dbReference type="Pfam" id="PF00132">
    <property type="entry name" value="Hexapep"/>
    <property type="match status" value="2"/>
</dbReference>
<dbReference type="Pfam" id="PF04613">
    <property type="entry name" value="LpxD"/>
    <property type="match status" value="1"/>
</dbReference>
<dbReference type="SUPFAM" id="SSF51161">
    <property type="entry name" value="Trimeric LpxA-like enzymes"/>
    <property type="match status" value="1"/>
</dbReference>
<feature type="chain" id="PRO_0000264347" description="UDP-3-O-acylglucosamine N-acyltransferase">
    <location>
        <begin position="1"/>
        <end position="346"/>
    </location>
</feature>
<feature type="active site" description="Proton acceptor" evidence="1">
    <location>
        <position position="240"/>
    </location>
</feature>
<name>LPXD_BACFN</name>
<reference key="1">
    <citation type="journal article" date="2005" name="Science">
        <title>Extensive DNA inversions in the B. fragilis genome control variable gene expression.</title>
        <authorList>
            <person name="Cerdeno-Tarraga A.-M."/>
            <person name="Patrick S."/>
            <person name="Crossman L.C."/>
            <person name="Blakely G."/>
            <person name="Abratt V."/>
            <person name="Lennard N."/>
            <person name="Poxton I."/>
            <person name="Duerden B."/>
            <person name="Harris B."/>
            <person name="Quail M.A."/>
            <person name="Barron A."/>
            <person name="Clark L."/>
            <person name="Corton C."/>
            <person name="Doggett J."/>
            <person name="Holden M.T.G."/>
            <person name="Larke N."/>
            <person name="Line A."/>
            <person name="Lord A."/>
            <person name="Norbertczak H."/>
            <person name="Ormond D."/>
            <person name="Price C."/>
            <person name="Rabbinowitsch E."/>
            <person name="Woodward J."/>
            <person name="Barrell B.G."/>
            <person name="Parkhill J."/>
        </authorList>
    </citation>
    <scope>NUCLEOTIDE SEQUENCE [LARGE SCALE GENOMIC DNA]</scope>
    <source>
        <strain>ATCC 25285 / DSM 2151 / CCUG 4856 / JCM 11019 / LMG 10263 / NCTC 9343 / Onslow / VPI 2553 / EN-2</strain>
    </source>
</reference>
<protein>
    <recommendedName>
        <fullName evidence="1">UDP-3-O-acylglucosamine N-acyltransferase</fullName>
        <ecNumber evidence="1">2.3.1.191</ecNumber>
    </recommendedName>
</protein>
<proteinExistence type="inferred from homology"/>
<evidence type="ECO:0000255" key="1">
    <source>
        <dbReference type="HAMAP-Rule" id="MF_00523"/>
    </source>
</evidence>